<dbReference type="EC" id="2.5.1.150" evidence="1"/>
<dbReference type="EMBL" id="AE004437">
    <property type="protein sequence ID" value="AAG19931.1"/>
    <property type="molecule type" value="Genomic_DNA"/>
</dbReference>
<dbReference type="PIR" id="G84320">
    <property type="entry name" value="G84320"/>
</dbReference>
<dbReference type="RefSeq" id="WP_010903229.1">
    <property type="nucleotide sequence ID" value="NC_002607.1"/>
</dbReference>
<dbReference type="SMR" id="Q9HPD9"/>
<dbReference type="STRING" id="64091.VNG_1682C"/>
<dbReference type="PaxDb" id="64091-VNG_1682C"/>
<dbReference type="KEGG" id="hal:VNG_1682C"/>
<dbReference type="PATRIC" id="fig|64091.14.peg.1283"/>
<dbReference type="HOGENOM" id="CLU_058976_0_0_2"/>
<dbReference type="InParanoid" id="Q9HPD9"/>
<dbReference type="OrthoDB" id="305381at2157"/>
<dbReference type="PhylomeDB" id="Q9HPD9"/>
<dbReference type="Proteomes" id="UP000000554">
    <property type="component" value="Chromosome"/>
</dbReference>
<dbReference type="GO" id="GO:0005886">
    <property type="term" value="C:plasma membrane"/>
    <property type="evidence" value="ECO:0007669"/>
    <property type="project" value="UniProtKB-SubCell"/>
</dbReference>
<dbReference type="GO" id="GO:0016765">
    <property type="term" value="F:transferase activity, transferring alkyl or aryl (other than methyl) groups"/>
    <property type="evidence" value="ECO:0007669"/>
    <property type="project" value="InterPro"/>
</dbReference>
<dbReference type="GO" id="GO:0016117">
    <property type="term" value="P:carotenoid biosynthetic process"/>
    <property type="evidence" value="ECO:0007669"/>
    <property type="project" value="UniProtKB-KW"/>
</dbReference>
<dbReference type="CDD" id="cd13966">
    <property type="entry name" value="PT_UbiA_4"/>
    <property type="match status" value="1"/>
</dbReference>
<dbReference type="Gene3D" id="1.10.357.140">
    <property type="entry name" value="UbiA prenyltransferase"/>
    <property type="match status" value="1"/>
</dbReference>
<dbReference type="Gene3D" id="1.20.120.1780">
    <property type="entry name" value="UbiA prenyltransferase"/>
    <property type="match status" value="1"/>
</dbReference>
<dbReference type="InterPro" id="IPR050475">
    <property type="entry name" value="Prenyltransferase_related"/>
</dbReference>
<dbReference type="InterPro" id="IPR000537">
    <property type="entry name" value="UbiA_prenyltransferase"/>
</dbReference>
<dbReference type="InterPro" id="IPR044878">
    <property type="entry name" value="UbiA_sf"/>
</dbReference>
<dbReference type="NCBIfam" id="NF009516">
    <property type="entry name" value="PRK12875.1"/>
    <property type="match status" value="1"/>
</dbReference>
<dbReference type="PANTHER" id="PTHR42723">
    <property type="entry name" value="CHLOROPHYLL SYNTHASE"/>
    <property type="match status" value="1"/>
</dbReference>
<dbReference type="PANTHER" id="PTHR42723:SF1">
    <property type="entry name" value="CHLOROPHYLL SYNTHASE, CHLOROPLASTIC"/>
    <property type="match status" value="1"/>
</dbReference>
<dbReference type="Pfam" id="PF01040">
    <property type="entry name" value="UbiA"/>
    <property type="match status" value="1"/>
</dbReference>
<protein>
    <recommendedName>
        <fullName evidence="5">Lycopene elongase/hydratase</fullName>
        <ecNumber evidence="1">2.5.1.150</ecNumber>
    </recommendedName>
</protein>
<name>LYEL_HALSA</name>
<reference key="1">
    <citation type="journal article" date="2000" name="Proc. Natl. Acad. Sci. U.S.A.">
        <title>Genome sequence of Halobacterium species NRC-1.</title>
        <authorList>
            <person name="Ng W.V."/>
            <person name="Kennedy S.P."/>
            <person name="Mahairas G.G."/>
            <person name="Berquist B."/>
            <person name="Pan M."/>
            <person name="Shukla H.D."/>
            <person name="Lasky S.R."/>
            <person name="Baliga N.S."/>
            <person name="Thorsson V."/>
            <person name="Sbrogna J."/>
            <person name="Swartzell S."/>
            <person name="Weir D."/>
            <person name="Hall J."/>
            <person name="Dahl T.A."/>
            <person name="Welti R."/>
            <person name="Goo Y.A."/>
            <person name="Leithauser B."/>
            <person name="Keller K."/>
            <person name="Cruz R."/>
            <person name="Danson M.J."/>
            <person name="Hough D.W."/>
            <person name="Maddocks D.G."/>
            <person name="Jablonski P.E."/>
            <person name="Krebs M.P."/>
            <person name="Angevine C.M."/>
            <person name="Dale H."/>
            <person name="Isenbarger T.A."/>
            <person name="Peck R.F."/>
            <person name="Pohlschroder M."/>
            <person name="Spudich J.L."/>
            <person name="Jung K.-H."/>
            <person name="Alam M."/>
            <person name="Freitas T."/>
            <person name="Hou S."/>
            <person name="Daniels C.J."/>
            <person name="Dennis P.P."/>
            <person name="Omer A.D."/>
            <person name="Ebhardt H."/>
            <person name="Lowe T.M."/>
            <person name="Liang P."/>
            <person name="Riley M."/>
            <person name="Hood L."/>
            <person name="DasSarma S."/>
        </authorList>
    </citation>
    <scope>NUCLEOTIDE SEQUENCE [LARGE SCALE GENOMIC DNA]</scope>
    <source>
        <strain>ATCC 700922 / JCM 11081 / NRC-1</strain>
    </source>
</reference>
<reference key="2">
    <citation type="journal article" date="2011" name="J. Bacteriol.">
        <title>Bacterioopsin-mediated regulation of bacterioruberin biosynthesis in Halobacterium salinarum.</title>
        <authorList>
            <person name="Dummer A.M."/>
            <person name="Bonsall J.C."/>
            <person name="Cihla J.B."/>
            <person name="Lawry S.M."/>
            <person name="Johnson G.C."/>
            <person name="Peck R.F."/>
        </authorList>
    </citation>
    <scope>FUNCTION</scope>
    <scope>CATALYTIC ACTIVITY</scope>
    <scope>ACTIVITY REGULATION</scope>
    <scope>PATHWAY</scope>
    <scope>DISRUPTION PHENOTYPE</scope>
    <source>
        <strain>ATCC 700922 / JCM 11081 / NRC-1</strain>
    </source>
</reference>
<gene>
    <name evidence="4" type="primary">lye</name>
    <name type="ordered locus">VNG_1682C</name>
</gene>
<comment type="function">
    <text evidence="1 3">Involved in the biosynthesis of the acyclic C50 carotenoid bacterioruberin (BR) (PubMed:21840984). Acts as a bifunctional elongase/hydratase that catalyzes the elongation of lycopene by attaching a C(5) isoprene unit at C-2, as well as the hydroxylation of the previous end of the molecule (PubMed:21840984). The enzyme acts at both ends of the substrate, and catalyzes the conversion of lycopene to the C(45) intermediate dihydroisopentenyldehydrorhodopin (DH-IDR) and the conversion of isopentenyldehydrorhodopin (IDR) to the C(50) carotenoid dihydrobisanhydrobacterioruberin (DH-BABR) (By similarity). Can also catalyze the conversion of lycopene to tetrahydrobisanhydrobacterioruberin (TH-BABR) (PubMed:21840984).</text>
</comment>
<comment type="catalytic activity">
    <reaction evidence="3">
        <text>all-trans-lycopene + dimethylallyl diphosphate + H2O = dihydroisopentenyldehydrorhodopin + diphosphate</text>
        <dbReference type="Rhea" id="RHEA:58188"/>
        <dbReference type="ChEBI" id="CHEBI:15377"/>
        <dbReference type="ChEBI" id="CHEBI:15948"/>
        <dbReference type="ChEBI" id="CHEBI:33019"/>
        <dbReference type="ChEBI" id="CHEBI:57623"/>
        <dbReference type="ChEBI" id="CHEBI:87163"/>
        <dbReference type="EC" id="2.5.1.150"/>
    </reaction>
</comment>
<comment type="catalytic activity">
    <reaction evidence="1">
        <text>isopentenyldehydrorhodopin + dimethylallyl diphosphate + H2O = dihydrobisanhydrobacterioruberin + diphosphate</text>
        <dbReference type="Rhea" id="RHEA:58192"/>
        <dbReference type="ChEBI" id="CHEBI:15377"/>
        <dbReference type="ChEBI" id="CHEBI:33019"/>
        <dbReference type="ChEBI" id="CHEBI:57623"/>
        <dbReference type="ChEBI" id="CHEBI:87161"/>
        <dbReference type="ChEBI" id="CHEBI:87162"/>
        <dbReference type="EC" id="2.5.1.150"/>
    </reaction>
</comment>
<comment type="activity regulation">
    <text evidence="3">Inhibited by bacterioopsin.</text>
</comment>
<comment type="pathway">
    <text evidence="3">Carotenoid biosynthesis.</text>
</comment>
<comment type="subcellular location">
    <subcellularLocation>
        <location evidence="5">Cell membrane</location>
        <topology evidence="2">Multi-pass membrane protein</topology>
    </subcellularLocation>
</comment>
<comment type="disruption phenotype">
    <text evidence="3">Loss of bacterioruberins production.</text>
</comment>
<comment type="similarity">
    <text evidence="5">Belongs to the UbiA prenyltransferase family.</text>
</comment>
<keyword id="KW-0125">Carotenoid biosynthesis</keyword>
<keyword id="KW-1003">Cell membrane</keyword>
<keyword id="KW-0472">Membrane</keyword>
<keyword id="KW-1185">Reference proteome</keyword>
<keyword id="KW-0808">Transferase</keyword>
<keyword id="KW-0812">Transmembrane</keyword>
<keyword id="KW-1133">Transmembrane helix</keyword>
<accession>Q9HPD9</accession>
<feature type="chain" id="PRO_0000428794" description="Lycopene elongase/hydratase">
    <location>
        <begin position="1"/>
        <end position="275"/>
    </location>
</feature>
<feature type="transmembrane region" description="Helical" evidence="2">
    <location>
        <begin position="13"/>
        <end position="33"/>
    </location>
</feature>
<feature type="transmembrane region" description="Helical" evidence="2">
    <location>
        <begin position="38"/>
        <end position="58"/>
    </location>
</feature>
<feature type="transmembrane region" description="Helical" evidence="2">
    <location>
        <begin position="84"/>
        <end position="104"/>
    </location>
</feature>
<feature type="transmembrane region" description="Helical" evidence="2">
    <location>
        <begin position="107"/>
        <end position="127"/>
    </location>
</feature>
<feature type="transmembrane region" description="Helical" evidence="2">
    <location>
        <begin position="134"/>
        <end position="154"/>
    </location>
</feature>
<feature type="transmembrane region" description="Helical" evidence="2">
    <location>
        <begin position="160"/>
        <end position="180"/>
    </location>
</feature>
<feature type="transmembrane region" description="Helical" evidence="2">
    <location>
        <begin position="203"/>
        <end position="223"/>
    </location>
</feature>
<feature type="transmembrane region" description="Helical" evidence="2">
    <location>
        <begin position="225"/>
        <end position="245"/>
    </location>
</feature>
<feature type="transmembrane region" description="Helical" evidence="2">
    <location>
        <begin position="253"/>
        <end position="273"/>
    </location>
</feature>
<organism>
    <name type="scientific">Halobacterium salinarum (strain ATCC 700922 / JCM 11081 / NRC-1)</name>
    <name type="common">Halobacterium halobium</name>
    <dbReference type="NCBI Taxonomy" id="64091"/>
    <lineage>
        <taxon>Archaea</taxon>
        <taxon>Methanobacteriati</taxon>
        <taxon>Methanobacteriota</taxon>
        <taxon>Stenosarchaea group</taxon>
        <taxon>Halobacteria</taxon>
        <taxon>Halobacteriales</taxon>
        <taxon>Halobacteriaceae</taxon>
        <taxon>Halobacterium</taxon>
        <taxon>Halobacterium salinarum NRC-34001</taxon>
    </lineage>
</organism>
<evidence type="ECO:0000250" key="1">
    <source>
        <dbReference type="UniProtKB" id="M0L7V9"/>
    </source>
</evidence>
<evidence type="ECO:0000255" key="2"/>
<evidence type="ECO:0000269" key="3">
    <source>
    </source>
</evidence>
<evidence type="ECO:0000303" key="4">
    <source>
    </source>
</evidence>
<evidence type="ECO:0000305" key="5"/>
<sequence length="275" mass="29589">MFRYLFVLSRPRFWLYLAGPVLVGVSYGATTVGELFSAPAVVLFSYFLLPANIYLYGINDVFDRDVDETNPKKDGRESRYRGGAAVAVIVAVCGVFLGFVAAPLPAEAWPYLAAWFVLATEYSAPPLRFKTTPVLDSLSNGLYVLPAAAAYAGVSGTHPPLLAVAGGWLWAMGMHTFSAIPDIEPDRAAGIQTTATALGADRALAYCAGIWLLSAAVFALVDVRFGLLLLAYPVLVFGIRRLQVAVGRAYWWYPAVNTLVGMVFTLGGLWGVVHG</sequence>
<proteinExistence type="evidence at protein level"/>